<gene>
    <name evidence="1" type="primary">recR</name>
    <name type="ordered locus">BURPS1106A_2242</name>
</gene>
<feature type="chain" id="PRO_0000322870" description="Recombination protein RecR">
    <location>
        <begin position="1"/>
        <end position="200"/>
    </location>
</feature>
<feature type="domain" description="Toprim" evidence="1">
    <location>
        <begin position="82"/>
        <end position="177"/>
    </location>
</feature>
<feature type="zinc finger region" description="C4-type" evidence="1">
    <location>
        <begin position="59"/>
        <end position="74"/>
    </location>
</feature>
<protein>
    <recommendedName>
        <fullName evidence="1">Recombination protein RecR</fullName>
    </recommendedName>
</protein>
<name>RECR_BURP0</name>
<evidence type="ECO:0000255" key="1">
    <source>
        <dbReference type="HAMAP-Rule" id="MF_00017"/>
    </source>
</evidence>
<accession>A3NVY5</accession>
<organism>
    <name type="scientific">Burkholderia pseudomallei (strain 1106a)</name>
    <dbReference type="NCBI Taxonomy" id="357348"/>
    <lineage>
        <taxon>Bacteria</taxon>
        <taxon>Pseudomonadati</taxon>
        <taxon>Pseudomonadota</taxon>
        <taxon>Betaproteobacteria</taxon>
        <taxon>Burkholderiales</taxon>
        <taxon>Burkholderiaceae</taxon>
        <taxon>Burkholderia</taxon>
        <taxon>pseudomallei group</taxon>
    </lineage>
</organism>
<proteinExistence type="inferred from homology"/>
<comment type="function">
    <text evidence="1">May play a role in DNA repair. It seems to be involved in an RecBC-independent recombinational process of DNA repair. It may act with RecF and RecO.</text>
</comment>
<comment type="similarity">
    <text evidence="1">Belongs to the RecR family.</text>
</comment>
<dbReference type="EMBL" id="CP000572">
    <property type="protein sequence ID" value="ABN89218.1"/>
    <property type="molecule type" value="Genomic_DNA"/>
</dbReference>
<dbReference type="RefSeq" id="WP_004521324.1">
    <property type="nucleotide sequence ID" value="NC_009076.1"/>
</dbReference>
<dbReference type="SMR" id="A3NVY5"/>
<dbReference type="KEGG" id="bpl:BURPS1106A_2242"/>
<dbReference type="HOGENOM" id="CLU_060739_1_2_4"/>
<dbReference type="Proteomes" id="UP000006738">
    <property type="component" value="Chromosome I"/>
</dbReference>
<dbReference type="GO" id="GO:0003677">
    <property type="term" value="F:DNA binding"/>
    <property type="evidence" value="ECO:0007669"/>
    <property type="project" value="UniProtKB-UniRule"/>
</dbReference>
<dbReference type="GO" id="GO:0008270">
    <property type="term" value="F:zinc ion binding"/>
    <property type="evidence" value="ECO:0007669"/>
    <property type="project" value="UniProtKB-KW"/>
</dbReference>
<dbReference type="GO" id="GO:0006310">
    <property type="term" value="P:DNA recombination"/>
    <property type="evidence" value="ECO:0007669"/>
    <property type="project" value="UniProtKB-UniRule"/>
</dbReference>
<dbReference type="GO" id="GO:0006281">
    <property type="term" value="P:DNA repair"/>
    <property type="evidence" value="ECO:0007669"/>
    <property type="project" value="UniProtKB-UniRule"/>
</dbReference>
<dbReference type="CDD" id="cd01025">
    <property type="entry name" value="TOPRIM_recR"/>
    <property type="match status" value="1"/>
</dbReference>
<dbReference type="Gene3D" id="3.30.60.80">
    <property type="match status" value="1"/>
</dbReference>
<dbReference type="Gene3D" id="3.40.1360.10">
    <property type="match status" value="1"/>
</dbReference>
<dbReference type="Gene3D" id="6.10.250.240">
    <property type="match status" value="1"/>
</dbReference>
<dbReference type="Gene3D" id="1.10.8.420">
    <property type="entry name" value="RecR Domain 1"/>
    <property type="match status" value="1"/>
</dbReference>
<dbReference type="HAMAP" id="MF_00017">
    <property type="entry name" value="RecR"/>
    <property type="match status" value="1"/>
</dbReference>
<dbReference type="InterPro" id="IPR000093">
    <property type="entry name" value="DNA_Rcmb_RecR"/>
</dbReference>
<dbReference type="InterPro" id="IPR023627">
    <property type="entry name" value="Rcmb_RecR"/>
</dbReference>
<dbReference type="InterPro" id="IPR015967">
    <property type="entry name" value="Rcmb_RecR_Znf"/>
</dbReference>
<dbReference type="InterPro" id="IPR006171">
    <property type="entry name" value="TOPRIM_dom"/>
</dbReference>
<dbReference type="InterPro" id="IPR034137">
    <property type="entry name" value="TOPRIM_RecR"/>
</dbReference>
<dbReference type="NCBIfam" id="TIGR00615">
    <property type="entry name" value="recR"/>
    <property type="match status" value="1"/>
</dbReference>
<dbReference type="PANTHER" id="PTHR30446">
    <property type="entry name" value="RECOMBINATION PROTEIN RECR"/>
    <property type="match status" value="1"/>
</dbReference>
<dbReference type="PANTHER" id="PTHR30446:SF0">
    <property type="entry name" value="RECOMBINATION PROTEIN RECR"/>
    <property type="match status" value="1"/>
</dbReference>
<dbReference type="Pfam" id="PF21175">
    <property type="entry name" value="RecR_C"/>
    <property type="match status" value="1"/>
</dbReference>
<dbReference type="Pfam" id="PF21176">
    <property type="entry name" value="RecR_HhH"/>
    <property type="match status" value="1"/>
</dbReference>
<dbReference type="Pfam" id="PF02132">
    <property type="entry name" value="RecR_ZnF"/>
    <property type="match status" value="1"/>
</dbReference>
<dbReference type="Pfam" id="PF13662">
    <property type="entry name" value="Toprim_4"/>
    <property type="match status" value="1"/>
</dbReference>
<dbReference type="SMART" id="SM00493">
    <property type="entry name" value="TOPRIM"/>
    <property type="match status" value="1"/>
</dbReference>
<dbReference type="SUPFAM" id="SSF111304">
    <property type="entry name" value="Recombination protein RecR"/>
    <property type="match status" value="1"/>
</dbReference>
<dbReference type="PROSITE" id="PS01300">
    <property type="entry name" value="RECR"/>
    <property type="match status" value="1"/>
</dbReference>
<dbReference type="PROSITE" id="PS50880">
    <property type="entry name" value="TOPRIM"/>
    <property type="match status" value="1"/>
</dbReference>
<reference key="1">
    <citation type="journal article" date="2010" name="Genome Biol. Evol.">
        <title>Continuing evolution of Burkholderia mallei through genome reduction and large-scale rearrangements.</title>
        <authorList>
            <person name="Losada L."/>
            <person name="Ronning C.M."/>
            <person name="DeShazer D."/>
            <person name="Woods D."/>
            <person name="Fedorova N."/>
            <person name="Kim H.S."/>
            <person name="Shabalina S.A."/>
            <person name="Pearson T.R."/>
            <person name="Brinkac L."/>
            <person name="Tan P."/>
            <person name="Nandi T."/>
            <person name="Crabtree J."/>
            <person name="Badger J."/>
            <person name="Beckstrom-Sternberg S."/>
            <person name="Saqib M."/>
            <person name="Schutzer S.E."/>
            <person name="Keim P."/>
            <person name="Nierman W.C."/>
        </authorList>
    </citation>
    <scope>NUCLEOTIDE SEQUENCE [LARGE SCALE GENOMIC DNA]</scope>
    <source>
        <strain>1106a</strain>
    </source>
</reference>
<keyword id="KW-0227">DNA damage</keyword>
<keyword id="KW-0233">DNA recombination</keyword>
<keyword id="KW-0234">DNA repair</keyword>
<keyword id="KW-0479">Metal-binding</keyword>
<keyword id="KW-0862">Zinc</keyword>
<keyword id="KW-0863">Zinc-finger</keyword>
<sequence>MSIKPPSALSELVEALRALPGVGPKSAQRIAYHLMQHDREGAERLGRSLLFATEHLRHCEKCNTFTEAQVCEVCSDPERDPALLCVVETPADQIMLEQTMTYRGLYFVLMGRLSPLDGIGPKEIHFDRLVRRASDGIVKEVVLATNFTNEGEATAHYLGQTLKARGLAVTRLARGVPVGGELEYVDAGTIARAMLDRRTL</sequence>